<feature type="chain" id="PRO_0000292512" description="Vacuolar protein sorting-associated protein 27">
    <location>
        <begin position="1"/>
        <end position="603"/>
    </location>
</feature>
<feature type="domain" description="VHS" evidence="4">
    <location>
        <begin position="18"/>
        <end position="149"/>
    </location>
</feature>
<feature type="domain" description="UIM 1" evidence="3">
    <location>
        <begin position="254"/>
        <end position="273"/>
    </location>
</feature>
<feature type="domain" description="UIM 2" evidence="3">
    <location>
        <begin position="292"/>
        <end position="311"/>
    </location>
</feature>
<feature type="zinc finger region" description="FYVE-type; atypical" evidence="2">
    <location>
        <begin position="170"/>
        <end position="230"/>
    </location>
</feature>
<feature type="region of interest" description="Disordered" evidence="5">
    <location>
        <begin position="233"/>
        <end position="257"/>
    </location>
</feature>
<feature type="region of interest" description="Disordered" evidence="5">
    <location>
        <begin position="307"/>
        <end position="340"/>
    </location>
</feature>
<feature type="region of interest" description="Disordered" evidence="5">
    <location>
        <begin position="452"/>
        <end position="483"/>
    </location>
</feature>
<feature type="region of interest" description="Disordered" evidence="5">
    <location>
        <begin position="496"/>
        <end position="519"/>
    </location>
</feature>
<feature type="region of interest" description="Disordered" evidence="5">
    <location>
        <begin position="536"/>
        <end position="603"/>
    </location>
</feature>
<feature type="compositionally biased region" description="Basic residues" evidence="5">
    <location>
        <begin position="239"/>
        <end position="249"/>
    </location>
</feature>
<feature type="compositionally biased region" description="Basic and acidic residues" evidence="5">
    <location>
        <begin position="307"/>
        <end position="319"/>
    </location>
</feature>
<feature type="compositionally biased region" description="Low complexity" evidence="5">
    <location>
        <begin position="452"/>
        <end position="463"/>
    </location>
</feature>
<feature type="compositionally biased region" description="Polar residues" evidence="5">
    <location>
        <begin position="473"/>
        <end position="483"/>
    </location>
</feature>
<feature type="compositionally biased region" description="Polar residues" evidence="5">
    <location>
        <begin position="498"/>
        <end position="507"/>
    </location>
</feature>
<feature type="binding site" evidence="2">
    <location>
        <position position="176"/>
    </location>
    <ligand>
        <name>Zn(2+)</name>
        <dbReference type="ChEBI" id="CHEBI:29105"/>
        <label>1</label>
    </ligand>
</feature>
<feature type="binding site" evidence="2">
    <location>
        <position position="179"/>
    </location>
    <ligand>
        <name>Zn(2+)</name>
        <dbReference type="ChEBI" id="CHEBI:29105"/>
        <label>1</label>
    </ligand>
</feature>
<feature type="binding site" evidence="2">
    <location>
        <position position="192"/>
    </location>
    <ligand>
        <name>Zn(2+)</name>
        <dbReference type="ChEBI" id="CHEBI:29105"/>
        <label>2</label>
    </ligand>
</feature>
<feature type="binding site" evidence="2">
    <location>
        <position position="195"/>
    </location>
    <ligand>
        <name>Zn(2+)</name>
        <dbReference type="ChEBI" id="CHEBI:29105"/>
        <label>2</label>
    </ligand>
</feature>
<feature type="binding site" evidence="2">
    <location>
        <position position="200"/>
    </location>
    <ligand>
        <name>Zn(2+)</name>
        <dbReference type="ChEBI" id="CHEBI:29105"/>
        <label>1</label>
    </ligand>
</feature>
<feature type="binding site" evidence="2">
    <location>
        <position position="203"/>
    </location>
    <ligand>
        <name>Zn(2+)</name>
        <dbReference type="ChEBI" id="CHEBI:29105"/>
        <label>1</label>
    </ligand>
</feature>
<feature type="binding site" evidence="2">
    <location>
        <position position="222"/>
    </location>
    <ligand>
        <name>Zn(2+)</name>
        <dbReference type="ChEBI" id="CHEBI:29105"/>
        <label>2</label>
    </ligand>
</feature>
<feature type="binding site" evidence="2">
    <location>
        <position position="225"/>
    </location>
    <ligand>
        <name>Zn(2+)</name>
        <dbReference type="ChEBI" id="CHEBI:29105"/>
        <label>2</label>
    </ligand>
</feature>
<evidence type="ECO:0000250" key="1"/>
<evidence type="ECO:0000255" key="2">
    <source>
        <dbReference type="PROSITE-ProRule" id="PRU00091"/>
    </source>
</evidence>
<evidence type="ECO:0000255" key="3">
    <source>
        <dbReference type="PROSITE-ProRule" id="PRU00213"/>
    </source>
</evidence>
<evidence type="ECO:0000255" key="4">
    <source>
        <dbReference type="PROSITE-ProRule" id="PRU00218"/>
    </source>
</evidence>
<evidence type="ECO:0000256" key="5">
    <source>
        <dbReference type="SAM" id="MobiDB-lite"/>
    </source>
</evidence>
<evidence type="ECO:0000305" key="6"/>
<protein>
    <recommendedName>
        <fullName>Vacuolar protein sorting-associated protein 27</fullName>
    </recommendedName>
</protein>
<gene>
    <name type="primary">VPS27</name>
    <name type="ordered locus">CAGL0I05830g</name>
</gene>
<keyword id="KW-0967">Endosome</keyword>
<keyword id="KW-0472">Membrane</keyword>
<keyword id="KW-0479">Metal-binding</keyword>
<keyword id="KW-1185">Reference proteome</keyword>
<keyword id="KW-0677">Repeat</keyword>
<keyword id="KW-0862">Zinc</keyword>
<keyword id="KW-0863">Zinc-finger</keyword>
<accession>Q6FQJ1</accession>
<proteinExistence type="inferred from homology"/>
<comment type="function">
    <text evidence="1">Component of the ESCRT-0 complex which is the sorting receptor for ubiquitinated cargo proteins at the multivesicular body (MVB) and recruits ESCRT-I to the MVB outer membrane.</text>
</comment>
<comment type="subunit">
    <text>Component of the ESCRT-0 complex composed of HSE1 and VPS27.</text>
</comment>
<comment type="subcellular location">
    <subcellularLocation>
        <location evidence="1">Endosome membrane</location>
        <topology evidence="1">Peripheral membrane protein</topology>
        <orientation evidence="1">Cytoplasmic side</orientation>
    </subcellularLocation>
</comment>
<comment type="domain">
    <text>The FYVE domain is involved in the binding to phosphatidylinositol 3-phosphate (PtdIns(3)P) which is required for the association to endosomal membranes.</text>
</comment>
<comment type="domain">
    <text evidence="1">Both IUM domains are necessary for efficient binding to ubiquitin.</text>
</comment>
<comment type="similarity">
    <text evidence="6">Belongs to the VPS27 family.</text>
</comment>
<reference key="1">
    <citation type="journal article" date="2004" name="Nature">
        <title>Genome evolution in yeasts.</title>
        <authorList>
            <person name="Dujon B."/>
            <person name="Sherman D."/>
            <person name="Fischer G."/>
            <person name="Durrens P."/>
            <person name="Casaregola S."/>
            <person name="Lafontaine I."/>
            <person name="de Montigny J."/>
            <person name="Marck C."/>
            <person name="Neuveglise C."/>
            <person name="Talla E."/>
            <person name="Goffard N."/>
            <person name="Frangeul L."/>
            <person name="Aigle M."/>
            <person name="Anthouard V."/>
            <person name="Babour A."/>
            <person name="Barbe V."/>
            <person name="Barnay S."/>
            <person name="Blanchin S."/>
            <person name="Beckerich J.-M."/>
            <person name="Beyne E."/>
            <person name="Bleykasten C."/>
            <person name="Boisrame A."/>
            <person name="Boyer J."/>
            <person name="Cattolico L."/>
            <person name="Confanioleri F."/>
            <person name="de Daruvar A."/>
            <person name="Despons L."/>
            <person name="Fabre E."/>
            <person name="Fairhead C."/>
            <person name="Ferry-Dumazet H."/>
            <person name="Groppi A."/>
            <person name="Hantraye F."/>
            <person name="Hennequin C."/>
            <person name="Jauniaux N."/>
            <person name="Joyet P."/>
            <person name="Kachouri R."/>
            <person name="Kerrest A."/>
            <person name="Koszul R."/>
            <person name="Lemaire M."/>
            <person name="Lesur I."/>
            <person name="Ma L."/>
            <person name="Muller H."/>
            <person name="Nicaud J.-M."/>
            <person name="Nikolski M."/>
            <person name="Oztas S."/>
            <person name="Ozier-Kalogeropoulos O."/>
            <person name="Pellenz S."/>
            <person name="Potier S."/>
            <person name="Richard G.-F."/>
            <person name="Straub M.-L."/>
            <person name="Suleau A."/>
            <person name="Swennen D."/>
            <person name="Tekaia F."/>
            <person name="Wesolowski-Louvel M."/>
            <person name="Westhof E."/>
            <person name="Wirth B."/>
            <person name="Zeniou-Meyer M."/>
            <person name="Zivanovic Y."/>
            <person name="Bolotin-Fukuhara M."/>
            <person name="Thierry A."/>
            <person name="Bouchier C."/>
            <person name="Caudron B."/>
            <person name="Scarpelli C."/>
            <person name="Gaillardin C."/>
            <person name="Weissenbach J."/>
            <person name="Wincker P."/>
            <person name="Souciet J.-L."/>
        </authorList>
    </citation>
    <scope>NUCLEOTIDE SEQUENCE [LARGE SCALE GENOMIC DNA]</scope>
    <source>
        <strain>ATCC 2001 / BCRC 20586 / JCM 3761 / NBRC 0622 / NRRL Y-65 / CBS 138</strain>
    </source>
</reference>
<sequence length="603" mass="68711">MATTSSEEFSEVIERATSESIPNGELNLPVALEISDILRSRRIAPKDGMRCLKKRITNTTNNPNTQLSSWKLVEICIKNGGIPFLREICSREFMDTMEHTILKYDDSDEVVELVTTMLYELYLAFQNDSQLNYVSRVYDKLRQRGVKFPEGAPISSNVNALFDSKTPADWIDSDACMICSKKFSLLNRRHHCRSCGGVFCQDHSSKSIPLPDLGIYDSVRVCDNCYDDYDYKKGSGSQGKKRKHRKSHRHATEDEDEDLRKAIELSLRASNSSVEPVIPVVESEPQIPAVEEEDPDLKAAIEASLREAEEEKRRREEHAQQQNTNAYPQQFRPPANELTPADEEDIYLFASLVERMKTRPPSEILDDPQLQQLAQKVFASKPRLGNTLNSKIQKYNTLVDMNGKISHIMNTYDNLLEQELRNINLSERFNVPQAQADPYSQYSQYNQPAIQNNTSQTNNVVNNKPLSQRESEPQYTAPTDSQTIESKAYERQLENLVQPPSNVNNERVASEPPYPNEELNDITSIQLNSERAGKYEENAVPPGSIPYPIENDDQDETTRTKKNDNITNFDFPTVPARKLPENNVEQVEDKPQDSQEEALLIEL</sequence>
<organism>
    <name type="scientific">Candida glabrata (strain ATCC 2001 / BCRC 20586 / JCM 3761 / NBRC 0622 / NRRL Y-65 / CBS 138)</name>
    <name type="common">Yeast</name>
    <name type="synonym">Nakaseomyces glabratus</name>
    <dbReference type="NCBI Taxonomy" id="284593"/>
    <lineage>
        <taxon>Eukaryota</taxon>
        <taxon>Fungi</taxon>
        <taxon>Dikarya</taxon>
        <taxon>Ascomycota</taxon>
        <taxon>Saccharomycotina</taxon>
        <taxon>Saccharomycetes</taxon>
        <taxon>Saccharomycetales</taxon>
        <taxon>Saccharomycetaceae</taxon>
        <taxon>Nakaseomyces</taxon>
    </lineage>
</organism>
<dbReference type="EMBL" id="CR380955">
    <property type="protein sequence ID" value="CAG60440.1"/>
    <property type="molecule type" value="Genomic_DNA"/>
</dbReference>
<dbReference type="RefSeq" id="XP_447503.1">
    <property type="nucleotide sequence ID" value="XM_447503.1"/>
</dbReference>
<dbReference type="SMR" id="Q6FQJ1"/>
<dbReference type="FunCoup" id="Q6FQJ1">
    <property type="interactions" value="138"/>
</dbReference>
<dbReference type="STRING" id="284593.Q6FQJ1"/>
<dbReference type="EnsemblFungi" id="CAGL0I05830g-T">
    <property type="protein sequence ID" value="CAGL0I05830g-T-p1"/>
    <property type="gene ID" value="CAGL0I05830g"/>
</dbReference>
<dbReference type="GeneID" id="2889348"/>
<dbReference type="KEGG" id="cgr:2889348"/>
<dbReference type="CGD" id="CAL0132704">
    <property type="gene designation" value="VPS27"/>
</dbReference>
<dbReference type="VEuPathDB" id="FungiDB:CAGL0I05830g"/>
<dbReference type="eggNOG" id="KOG1818">
    <property type="taxonomic scope" value="Eukaryota"/>
</dbReference>
<dbReference type="HOGENOM" id="CLU_011862_2_0_1"/>
<dbReference type="InParanoid" id="Q6FQJ1"/>
<dbReference type="OMA" id="HTWGGNT"/>
<dbReference type="Proteomes" id="UP000002428">
    <property type="component" value="Chromosome I"/>
</dbReference>
<dbReference type="GO" id="GO:0010008">
    <property type="term" value="C:endosome membrane"/>
    <property type="evidence" value="ECO:0007669"/>
    <property type="project" value="UniProtKB-SubCell"/>
</dbReference>
<dbReference type="GO" id="GO:0033565">
    <property type="term" value="C:ESCRT-0 complex"/>
    <property type="evidence" value="ECO:0007669"/>
    <property type="project" value="EnsemblFungi"/>
</dbReference>
<dbReference type="GO" id="GO:0005774">
    <property type="term" value="C:vacuolar membrane"/>
    <property type="evidence" value="ECO:0007669"/>
    <property type="project" value="EnsemblFungi"/>
</dbReference>
<dbReference type="GO" id="GO:0036435">
    <property type="term" value="F:K48-linked polyubiquitin modification-dependent protein binding"/>
    <property type="evidence" value="ECO:0007669"/>
    <property type="project" value="EnsemblFungi"/>
</dbReference>
<dbReference type="GO" id="GO:0070530">
    <property type="term" value="F:K63-linked polyubiquitin modification-dependent protein binding"/>
    <property type="evidence" value="ECO:0007669"/>
    <property type="project" value="EnsemblFungi"/>
</dbReference>
<dbReference type="GO" id="GO:0032266">
    <property type="term" value="F:phosphatidylinositol-3-phosphate binding"/>
    <property type="evidence" value="ECO:0007669"/>
    <property type="project" value="EnsemblFungi"/>
</dbReference>
<dbReference type="GO" id="GO:0019904">
    <property type="term" value="F:protein domain specific binding"/>
    <property type="evidence" value="ECO:0007669"/>
    <property type="project" value="EnsemblFungi"/>
</dbReference>
<dbReference type="GO" id="GO:0046982">
    <property type="term" value="F:protein heterodimerization activity"/>
    <property type="evidence" value="ECO:0007669"/>
    <property type="project" value="EnsemblFungi"/>
</dbReference>
<dbReference type="GO" id="GO:0043130">
    <property type="term" value="F:ubiquitin binding"/>
    <property type="evidence" value="ECO:0007669"/>
    <property type="project" value="EnsemblFungi"/>
</dbReference>
<dbReference type="GO" id="GO:0008270">
    <property type="term" value="F:zinc ion binding"/>
    <property type="evidence" value="ECO:0007669"/>
    <property type="project" value="UniProtKB-KW"/>
</dbReference>
<dbReference type="GO" id="GO:1904669">
    <property type="term" value="P:ATP export"/>
    <property type="evidence" value="ECO:0007669"/>
    <property type="project" value="EnsemblFungi"/>
</dbReference>
<dbReference type="GO" id="GO:0006995">
    <property type="term" value="P:cellular response to nitrogen starvation"/>
    <property type="evidence" value="ECO:0007669"/>
    <property type="project" value="EnsemblFungi"/>
</dbReference>
<dbReference type="GO" id="GO:0140504">
    <property type="term" value="P:microlipophagy"/>
    <property type="evidence" value="ECO:0007669"/>
    <property type="project" value="EnsemblFungi"/>
</dbReference>
<dbReference type="GO" id="GO:1903319">
    <property type="term" value="P:positive regulation of protein maturation"/>
    <property type="evidence" value="ECO:0007669"/>
    <property type="project" value="EnsemblFungi"/>
</dbReference>
<dbReference type="GO" id="GO:0045053">
    <property type="term" value="P:protein retention in Golgi apparatus"/>
    <property type="evidence" value="ECO:0007669"/>
    <property type="project" value="EnsemblFungi"/>
</dbReference>
<dbReference type="GO" id="GO:0009306">
    <property type="term" value="P:protein secretion"/>
    <property type="evidence" value="ECO:0007669"/>
    <property type="project" value="EnsemblFungi"/>
</dbReference>
<dbReference type="GO" id="GO:0006623">
    <property type="term" value="P:protein targeting to vacuole"/>
    <property type="evidence" value="ECO:0007669"/>
    <property type="project" value="EnsemblFungi"/>
</dbReference>
<dbReference type="GO" id="GO:0043328">
    <property type="term" value="P:protein transport to vacuole involved in ubiquitin-dependent protein catabolic process via the multivesicular body sorting pathway"/>
    <property type="evidence" value="ECO:0007669"/>
    <property type="project" value="TreeGrafter"/>
</dbReference>
<dbReference type="CDD" id="cd21385">
    <property type="entry name" value="GAT_Vps27"/>
    <property type="match status" value="1"/>
</dbReference>
<dbReference type="CDD" id="cd16979">
    <property type="entry name" value="VHS_Vps27"/>
    <property type="match status" value="1"/>
</dbReference>
<dbReference type="FunFam" id="1.25.40.90:FF:000039">
    <property type="entry name" value="Vacuolar protein sorting-associated protein 27"/>
    <property type="match status" value="1"/>
</dbReference>
<dbReference type="Gene3D" id="1.20.5.1940">
    <property type="match status" value="1"/>
</dbReference>
<dbReference type="Gene3D" id="1.25.40.90">
    <property type="match status" value="1"/>
</dbReference>
<dbReference type="Gene3D" id="6.10.140.100">
    <property type="match status" value="1"/>
</dbReference>
<dbReference type="Gene3D" id="3.30.40.10">
    <property type="entry name" value="Zinc/RING finger domain, C3HC4 (zinc finger)"/>
    <property type="match status" value="1"/>
</dbReference>
<dbReference type="InterPro" id="IPR008942">
    <property type="entry name" value="ENTH_VHS"/>
</dbReference>
<dbReference type="InterPro" id="IPR017073">
    <property type="entry name" value="HGS/VPS27"/>
</dbReference>
<dbReference type="InterPro" id="IPR003903">
    <property type="entry name" value="UIM_dom"/>
</dbReference>
<dbReference type="InterPro" id="IPR002014">
    <property type="entry name" value="VHS_dom"/>
</dbReference>
<dbReference type="InterPro" id="IPR049425">
    <property type="entry name" value="Vps27_GAT-like"/>
</dbReference>
<dbReference type="InterPro" id="IPR000306">
    <property type="entry name" value="Znf_FYVE"/>
</dbReference>
<dbReference type="InterPro" id="IPR017455">
    <property type="entry name" value="Znf_FYVE-rel"/>
</dbReference>
<dbReference type="InterPro" id="IPR011011">
    <property type="entry name" value="Znf_FYVE_PHD"/>
</dbReference>
<dbReference type="InterPro" id="IPR013083">
    <property type="entry name" value="Znf_RING/FYVE/PHD"/>
</dbReference>
<dbReference type="PANTHER" id="PTHR47794">
    <property type="entry name" value="VACUOLAR PROTEIN SORTING-ASSOCIATED PROTEIN 27"/>
    <property type="match status" value="1"/>
</dbReference>
<dbReference type="PANTHER" id="PTHR47794:SF1">
    <property type="entry name" value="VACUOLAR PROTEIN SORTING-ASSOCIATED PROTEIN 27"/>
    <property type="match status" value="1"/>
</dbReference>
<dbReference type="Pfam" id="PF01363">
    <property type="entry name" value="FYVE"/>
    <property type="match status" value="1"/>
</dbReference>
<dbReference type="Pfam" id="PF02809">
    <property type="entry name" value="UIM"/>
    <property type="match status" value="2"/>
</dbReference>
<dbReference type="Pfam" id="PF00790">
    <property type="entry name" value="VHS"/>
    <property type="match status" value="1"/>
</dbReference>
<dbReference type="Pfam" id="PF21356">
    <property type="entry name" value="Vps27_GAT-like"/>
    <property type="match status" value="1"/>
</dbReference>
<dbReference type="PIRSF" id="PIRSF036956">
    <property type="entry name" value="Hrs_Vps27"/>
    <property type="match status" value="1"/>
</dbReference>
<dbReference type="SMART" id="SM00064">
    <property type="entry name" value="FYVE"/>
    <property type="match status" value="1"/>
</dbReference>
<dbReference type="SMART" id="SM00726">
    <property type="entry name" value="UIM"/>
    <property type="match status" value="2"/>
</dbReference>
<dbReference type="SMART" id="SM00288">
    <property type="entry name" value="VHS"/>
    <property type="match status" value="1"/>
</dbReference>
<dbReference type="SUPFAM" id="SSF48464">
    <property type="entry name" value="ENTH/VHS domain"/>
    <property type="match status" value="1"/>
</dbReference>
<dbReference type="SUPFAM" id="SSF57903">
    <property type="entry name" value="FYVE/PHD zinc finger"/>
    <property type="match status" value="1"/>
</dbReference>
<dbReference type="PROSITE" id="PS50330">
    <property type="entry name" value="UIM"/>
    <property type="match status" value="2"/>
</dbReference>
<dbReference type="PROSITE" id="PS50179">
    <property type="entry name" value="VHS"/>
    <property type="match status" value="1"/>
</dbReference>
<dbReference type="PROSITE" id="PS50178">
    <property type="entry name" value="ZF_FYVE"/>
    <property type="match status" value="1"/>
</dbReference>
<name>VPS27_CANGA</name>